<sequence length="417" mass="45483">MLKREMNIADYDAELWQAMEQEKVRQEEHIELIASENYTSPRVMQAQGSQLTNKYAEGYPGKRYYGGCEYVDVVEQLAIDRAKELFGADYANVQPHSGSQANFAVYTALLQPGDTVLGMNLAQGGHLTHGSPVNFSGKLYNIVPYGIDESGKIDYDEMAKLAKEHKPKMIIGGFSAYSGVVDWAKMREIADSIGAYLFVDMAHVAGLIAAGVYPNPVPHAHVVTTTTHKTLAGPRGGLILAKGGDEELYKKLNSAVFPSAQGGPLMHVIAGKAVALKEAMEPEFKVYQQQVAKNAKAMVEVFLNRGYKVVSGGTENHLFLLDLVDKNLTGKEADAALGRANITVNKNSVPNDPKSPFVTSGIRIGSPAVTRRGFKEAEVKELAGWMCDVLDNINDEATIERVKVKVLDICARFPVYA</sequence>
<evidence type="ECO:0000255" key="1">
    <source>
        <dbReference type="HAMAP-Rule" id="MF_00051"/>
    </source>
</evidence>
<name>GLYA_SALPC</name>
<keyword id="KW-0028">Amino-acid biosynthesis</keyword>
<keyword id="KW-0963">Cytoplasm</keyword>
<keyword id="KW-0554">One-carbon metabolism</keyword>
<keyword id="KW-0663">Pyridoxal phosphate</keyword>
<keyword id="KW-0808">Transferase</keyword>
<dbReference type="EC" id="2.1.2.1" evidence="1"/>
<dbReference type="EMBL" id="CP000857">
    <property type="protein sequence ID" value="ACN45262.1"/>
    <property type="molecule type" value="Genomic_DNA"/>
</dbReference>
<dbReference type="RefSeq" id="WP_000919179.1">
    <property type="nucleotide sequence ID" value="NC_012125.1"/>
</dbReference>
<dbReference type="SMR" id="C0PYJ5"/>
<dbReference type="KEGG" id="sei:SPC_1096"/>
<dbReference type="HOGENOM" id="CLU_022477_2_1_6"/>
<dbReference type="UniPathway" id="UPA00193"/>
<dbReference type="UniPathway" id="UPA00288">
    <property type="reaction ID" value="UER01023"/>
</dbReference>
<dbReference type="Proteomes" id="UP000001599">
    <property type="component" value="Chromosome"/>
</dbReference>
<dbReference type="GO" id="GO:0005829">
    <property type="term" value="C:cytosol"/>
    <property type="evidence" value="ECO:0007669"/>
    <property type="project" value="TreeGrafter"/>
</dbReference>
<dbReference type="GO" id="GO:0004372">
    <property type="term" value="F:glycine hydroxymethyltransferase activity"/>
    <property type="evidence" value="ECO:0007669"/>
    <property type="project" value="UniProtKB-UniRule"/>
</dbReference>
<dbReference type="GO" id="GO:0030170">
    <property type="term" value="F:pyridoxal phosphate binding"/>
    <property type="evidence" value="ECO:0007669"/>
    <property type="project" value="UniProtKB-UniRule"/>
</dbReference>
<dbReference type="GO" id="GO:0019264">
    <property type="term" value="P:glycine biosynthetic process from serine"/>
    <property type="evidence" value="ECO:0007669"/>
    <property type="project" value="UniProtKB-UniRule"/>
</dbReference>
<dbReference type="GO" id="GO:0035999">
    <property type="term" value="P:tetrahydrofolate interconversion"/>
    <property type="evidence" value="ECO:0007669"/>
    <property type="project" value="UniProtKB-UniRule"/>
</dbReference>
<dbReference type="CDD" id="cd00378">
    <property type="entry name" value="SHMT"/>
    <property type="match status" value="1"/>
</dbReference>
<dbReference type="FunFam" id="3.40.640.10:FF:000001">
    <property type="entry name" value="Serine hydroxymethyltransferase"/>
    <property type="match status" value="1"/>
</dbReference>
<dbReference type="FunFam" id="3.90.1150.10:FF:000003">
    <property type="entry name" value="Serine hydroxymethyltransferase"/>
    <property type="match status" value="1"/>
</dbReference>
<dbReference type="Gene3D" id="3.90.1150.10">
    <property type="entry name" value="Aspartate Aminotransferase, domain 1"/>
    <property type="match status" value="1"/>
</dbReference>
<dbReference type="Gene3D" id="3.40.640.10">
    <property type="entry name" value="Type I PLP-dependent aspartate aminotransferase-like (Major domain)"/>
    <property type="match status" value="1"/>
</dbReference>
<dbReference type="HAMAP" id="MF_00051">
    <property type="entry name" value="SHMT"/>
    <property type="match status" value="1"/>
</dbReference>
<dbReference type="InterPro" id="IPR015424">
    <property type="entry name" value="PyrdxlP-dep_Trfase"/>
</dbReference>
<dbReference type="InterPro" id="IPR015421">
    <property type="entry name" value="PyrdxlP-dep_Trfase_major"/>
</dbReference>
<dbReference type="InterPro" id="IPR015422">
    <property type="entry name" value="PyrdxlP-dep_Trfase_small"/>
</dbReference>
<dbReference type="InterPro" id="IPR001085">
    <property type="entry name" value="Ser_HO-MeTrfase"/>
</dbReference>
<dbReference type="InterPro" id="IPR049943">
    <property type="entry name" value="Ser_HO-MeTrfase-like"/>
</dbReference>
<dbReference type="InterPro" id="IPR019798">
    <property type="entry name" value="Ser_HO-MeTrfase_PLP_BS"/>
</dbReference>
<dbReference type="InterPro" id="IPR039429">
    <property type="entry name" value="SHMT-like_dom"/>
</dbReference>
<dbReference type="NCBIfam" id="NF000586">
    <property type="entry name" value="PRK00011.1"/>
    <property type="match status" value="1"/>
</dbReference>
<dbReference type="PANTHER" id="PTHR11680">
    <property type="entry name" value="SERINE HYDROXYMETHYLTRANSFERASE"/>
    <property type="match status" value="1"/>
</dbReference>
<dbReference type="PANTHER" id="PTHR11680:SF50">
    <property type="entry name" value="SERINE HYDROXYMETHYLTRANSFERASE"/>
    <property type="match status" value="1"/>
</dbReference>
<dbReference type="Pfam" id="PF00464">
    <property type="entry name" value="SHMT"/>
    <property type="match status" value="1"/>
</dbReference>
<dbReference type="PIRSF" id="PIRSF000412">
    <property type="entry name" value="SHMT"/>
    <property type="match status" value="1"/>
</dbReference>
<dbReference type="SUPFAM" id="SSF53383">
    <property type="entry name" value="PLP-dependent transferases"/>
    <property type="match status" value="1"/>
</dbReference>
<dbReference type="PROSITE" id="PS00096">
    <property type="entry name" value="SHMT"/>
    <property type="match status" value="1"/>
</dbReference>
<comment type="function">
    <text evidence="1">Catalyzes the reversible interconversion of serine and glycine with tetrahydrofolate (THF) serving as the one-carbon carrier. This reaction serves as the major source of one-carbon groups required for the biosynthesis of purines, thymidylate, methionine, and other important biomolecules. Also exhibits THF-independent aldolase activity toward beta-hydroxyamino acids, producing glycine and aldehydes, via a retro-aldol mechanism.</text>
</comment>
<comment type="catalytic activity">
    <reaction evidence="1">
        <text>(6R)-5,10-methylene-5,6,7,8-tetrahydrofolate + glycine + H2O = (6S)-5,6,7,8-tetrahydrofolate + L-serine</text>
        <dbReference type="Rhea" id="RHEA:15481"/>
        <dbReference type="ChEBI" id="CHEBI:15377"/>
        <dbReference type="ChEBI" id="CHEBI:15636"/>
        <dbReference type="ChEBI" id="CHEBI:33384"/>
        <dbReference type="ChEBI" id="CHEBI:57305"/>
        <dbReference type="ChEBI" id="CHEBI:57453"/>
        <dbReference type="EC" id="2.1.2.1"/>
    </reaction>
</comment>
<comment type="cofactor">
    <cofactor evidence="1">
        <name>pyridoxal 5'-phosphate</name>
        <dbReference type="ChEBI" id="CHEBI:597326"/>
    </cofactor>
</comment>
<comment type="pathway">
    <text evidence="1">One-carbon metabolism; tetrahydrofolate interconversion.</text>
</comment>
<comment type="pathway">
    <text evidence="1">Amino-acid biosynthesis; glycine biosynthesis; glycine from L-serine: step 1/1.</text>
</comment>
<comment type="subunit">
    <text evidence="1">Homodimer.</text>
</comment>
<comment type="subcellular location">
    <subcellularLocation>
        <location evidence="1">Cytoplasm</location>
    </subcellularLocation>
</comment>
<comment type="similarity">
    <text evidence="1">Belongs to the SHMT family.</text>
</comment>
<protein>
    <recommendedName>
        <fullName evidence="1">Serine hydroxymethyltransferase</fullName>
        <shortName evidence="1">SHMT</shortName>
        <shortName evidence="1">Serine methylase</shortName>
        <ecNumber evidence="1">2.1.2.1</ecNumber>
    </recommendedName>
</protein>
<gene>
    <name evidence="1" type="primary">glyA</name>
    <name type="ordered locus">SPC_1096</name>
</gene>
<feature type="chain" id="PRO_1000117646" description="Serine hydroxymethyltransferase">
    <location>
        <begin position="1"/>
        <end position="417"/>
    </location>
</feature>
<feature type="binding site" evidence="1">
    <location>
        <position position="121"/>
    </location>
    <ligand>
        <name>(6S)-5,6,7,8-tetrahydrofolate</name>
        <dbReference type="ChEBI" id="CHEBI:57453"/>
    </ligand>
</feature>
<feature type="binding site" evidence="1">
    <location>
        <begin position="125"/>
        <end position="127"/>
    </location>
    <ligand>
        <name>(6S)-5,6,7,8-tetrahydrofolate</name>
        <dbReference type="ChEBI" id="CHEBI:57453"/>
    </ligand>
</feature>
<feature type="binding site" evidence="1">
    <location>
        <begin position="355"/>
        <end position="357"/>
    </location>
    <ligand>
        <name>(6S)-5,6,7,8-tetrahydrofolate</name>
        <dbReference type="ChEBI" id="CHEBI:57453"/>
    </ligand>
</feature>
<feature type="site" description="Plays an important role in substrate specificity" evidence="1">
    <location>
        <position position="228"/>
    </location>
</feature>
<feature type="modified residue" description="N6-(pyridoxal phosphate)lysine" evidence="1">
    <location>
        <position position="229"/>
    </location>
</feature>
<proteinExistence type="inferred from homology"/>
<reference key="1">
    <citation type="journal article" date="2009" name="PLoS ONE">
        <title>Salmonella paratyphi C: genetic divergence from Salmonella choleraesuis and pathogenic convergence with Salmonella typhi.</title>
        <authorList>
            <person name="Liu W.-Q."/>
            <person name="Feng Y."/>
            <person name="Wang Y."/>
            <person name="Zou Q.-H."/>
            <person name="Chen F."/>
            <person name="Guo J.-T."/>
            <person name="Peng Y.-H."/>
            <person name="Jin Y."/>
            <person name="Li Y.-G."/>
            <person name="Hu S.-N."/>
            <person name="Johnston R.N."/>
            <person name="Liu G.-R."/>
            <person name="Liu S.-L."/>
        </authorList>
    </citation>
    <scope>NUCLEOTIDE SEQUENCE [LARGE SCALE GENOMIC DNA]</scope>
    <source>
        <strain>RKS4594</strain>
    </source>
</reference>
<organism>
    <name type="scientific">Salmonella paratyphi C (strain RKS4594)</name>
    <dbReference type="NCBI Taxonomy" id="476213"/>
    <lineage>
        <taxon>Bacteria</taxon>
        <taxon>Pseudomonadati</taxon>
        <taxon>Pseudomonadota</taxon>
        <taxon>Gammaproteobacteria</taxon>
        <taxon>Enterobacterales</taxon>
        <taxon>Enterobacteriaceae</taxon>
        <taxon>Salmonella</taxon>
    </lineage>
</organism>
<accession>C0PYJ5</accession>